<organism>
    <name type="scientific">Schizosaccharomyces pombe (strain 972 / ATCC 24843)</name>
    <name type="common">Fission yeast</name>
    <dbReference type="NCBI Taxonomy" id="284812"/>
    <lineage>
        <taxon>Eukaryota</taxon>
        <taxon>Fungi</taxon>
        <taxon>Dikarya</taxon>
        <taxon>Ascomycota</taxon>
        <taxon>Taphrinomycotina</taxon>
        <taxon>Schizosaccharomycetes</taxon>
        <taxon>Schizosaccharomycetales</taxon>
        <taxon>Schizosaccharomycetaceae</taxon>
        <taxon>Schizosaccharomyces</taxon>
    </lineage>
</organism>
<accession>Q10197</accession>
<accession>P78749</accession>
<evidence type="ECO:0000255" key="1"/>
<evidence type="ECO:0000269" key="2">
    <source>
    </source>
</evidence>
<evidence type="ECO:0000269" key="3">
    <source>
    </source>
</evidence>
<evidence type="ECO:0000305" key="4"/>
<name>ALP1_SCHPO</name>
<keyword id="KW-0143">Chaperone</keyword>
<keyword id="KW-0963">Cytoplasm</keyword>
<keyword id="KW-0206">Cytoskeleton</keyword>
<keyword id="KW-0325">Glycoprotein</keyword>
<keyword id="KW-0493">Microtubule</keyword>
<keyword id="KW-1185">Reference proteome</keyword>
<keyword id="KW-0677">Repeat</keyword>
<proteinExistence type="evidence at protein level"/>
<protein>
    <recommendedName>
        <fullName>Tubulin-folding cofactor D</fullName>
    </recommendedName>
    <alternativeName>
        <fullName>Altered polarity protein 1</fullName>
    </alternativeName>
</protein>
<dbReference type="EMBL" id="Y10106">
    <property type="protein sequence ID" value="CAA71193.1"/>
    <property type="status" value="ALT_SEQ"/>
    <property type="molecule type" value="Genomic_DNA"/>
</dbReference>
<dbReference type="EMBL" id="CU329671">
    <property type="protein sequence ID" value="CAA20686.2"/>
    <property type="molecule type" value="Genomic_DNA"/>
</dbReference>
<dbReference type="PIR" id="T39319">
    <property type="entry name" value="S67381"/>
</dbReference>
<dbReference type="RefSeq" id="NP_596393.2">
    <property type="nucleotide sequence ID" value="NM_001022314.2"/>
</dbReference>
<dbReference type="BioGRID" id="276224">
    <property type="interactions" value="8"/>
</dbReference>
<dbReference type="FunCoup" id="Q10197">
    <property type="interactions" value="488"/>
</dbReference>
<dbReference type="STRING" id="284812.Q10197"/>
<dbReference type="GlyCosmos" id="Q10197">
    <property type="glycosylation" value="6 sites, No reported glycans"/>
</dbReference>
<dbReference type="iPTMnet" id="Q10197"/>
<dbReference type="PaxDb" id="4896-SPBC11C11.04c.1"/>
<dbReference type="EnsemblFungi" id="SPBC11C11.04c.1">
    <property type="protein sequence ID" value="SPBC11C11.04c.1:pep"/>
    <property type="gene ID" value="SPBC11C11.04c"/>
</dbReference>
<dbReference type="GeneID" id="2539669"/>
<dbReference type="KEGG" id="spo:2539669"/>
<dbReference type="PomBase" id="SPBC11C11.04c">
    <property type="gene designation" value="alp1"/>
</dbReference>
<dbReference type="VEuPathDB" id="FungiDB:SPBC11C11.04c"/>
<dbReference type="eggNOG" id="KOG1943">
    <property type="taxonomic scope" value="Eukaryota"/>
</dbReference>
<dbReference type="HOGENOM" id="CLU_280203_0_0_1"/>
<dbReference type="InParanoid" id="Q10197"/>
<dbReference type="OMA" id="EPHEAWH"/>
<dbReference type="PRO" id="PR:Q10197"/>
<dbReference type="Proteomes" id="UP000002485">
    <property type="component" value="Chromosome II"/>
</dbReference>
<dbReference type="GO" id="GO:0032153">
    <property type="term" value="C:cell division site"/>
    <property type="evidence" value="ECO:0007005"/>
    <property type="project" value="PomBase"/>
</dbReference>
<dbReference type="GO" id="GO:0005829">
    <property type="term" value="C:cytosol"/>
    <property type="evidence" value="ECO:0007005"/>
    <property type="project" value="PomBase"/>
</dbReference>
<dbReference type="GO" id="GO:0005874">
    <property type="term" value="C:microtubule"/>
    <property type="evidence" value="ECO:0007669"/>
    <property type="project" value="UniProtKB-KW"/>
</dbReference>
<dbReference type="GO" id="GO:0015630">
    <property type="term" value="C:microtubule cytoskeleton"/>
    <property type="evidence" value="ECO:0000314"/>
    <property type="project" value="PomBase"/>
</dbReference>
<dbReference type="GO" id="GO:0072686">
    <property type="term" value="C:mitotic spindle"/>
    <property type="evidence" value="ECO:0007005"/>
    <property type="project" value="PomBase"/>
</dbReference>
<dbReference type="GO" id="GO:0005634">
    <property type="term" value="C:nucleus"/>
    <property type="evidence" value="ECO:0007005"/>
    <property type="project" value="PomBase"/>
</dbReference>
<dbReference type="GO" id="GO:1990727">
    <property type="term" value="C:tubulin folding cofactor complex"/>
    <property type="evidence" value="ECO:0000303"/>
    <property type="project" value="PomBase"/>
</dbReference>
<dbReference type="GO" id="GO:0048487">
    <property type="term" value="F:beta-tubulin binding"/>
    <property type="evidence" value="ECO:0000318"/>
    <property type="project" value="GO_Central"/>
</dbReference>
<dbReference type="GO" id="GO:0005096">
    <property type="term" value="F:GTPase activator activity"/>
    <property type="evidence" value="ECO:0000318"/>
    <property type="project" value="GO_Central"/>
</dbReference>
<dbReference type="GO" id="GO:0044183">
    <property type="term" value="F:protein folding chaperone"/>
    <property type="evidence" value="ECO:0000269"/>
    <property type="project" value="PomBase"/>
</dbReference>
<dbReference type="GO" id="GO:0031122">
    <property type="term" value="P:cytoplasmic microtubule organization"/>
    <property type="evidence" value="ECO:0000315"/>
    <property type="project" value="PomBase"/>
</dbReference>
<dbReference type="GO" id="GO:0000226">
    <property type="term" value="P:microtubule cytoskeleton organization"/>
    <property type="evidence" value="ECO:0000318"/>
    <property type="project" value="GO_Central"/>
</dbReference>
<dbReference type="GO" id="GO:0007023">
    <property type="term" value="P:post-chaperonin tubulin folding pathway"/>
    <property type="evidence" value="ECO:0007669"/>
    <property type="project" value="InterPro"/>
</dbReference>
<dbReference type="GO" id="GO:0006457">
    <property type="term" value="P:protein folding"/>
    <property type="evidence" value="ECO:0000318"/>
    <property type="project" value="GO_Central"/>
</dbReference>
<dbReference type="GO" id="GO:0007021">
    <property type="term" value="P:tubulin complex assembly"/>
    <property type="evidence" value="ECO:0007669"/>
    <property type="project" value="InterPro"/>
</dbReference>
<dbReference type="Gene3D" id="1.25.10.10">
    <property type="entry name" value="Leucine-rich Repeat Variant"/>
    <property type="match status" value="1"/>
</dbReference>
<dbReference type="InterPro" id="IPR011989">
    <property type="entry name" value="ARM-like"/>
</dbReference>
<dbReference type="InterPro" id="IPR016024">
    <property type="entry name" value="ARM-type_fold"/>
</dbReference>
<dbReference type="InterPro" id="IPR033162">
    <property type="entry name" value="TBCD"/>
</dbReference>
<dbReference type="InterPro" id="IPR022577">
    <property type="entry name" value="Tubulin_specific_chaperoneD_C"/>
</dbReference>
<dbReference type="PANTHER" id="PTHR12658">
    <property type="entry name" value="BETA-TUBULIN COFACTOR D"/>
    <property type="match status" value="1"/>
</dbReference>
<dbReference type="PANTHER" id="PTHR12658:SF0">
    <property type="entry name" value="TUBULIN-SPECIFIC CHAPERONE D"/>
    <property type="match status" value="1"/>
</dbReference>
<dbReference type="Pfam" id="PF23579">
    <property type="entry name" value="ARM_TBCD"/>
    <property type="match status" value="1"/>
</dbReference>
<dbReference type="Pfam" id="PF12612">
    <property type="entry name" value="TFCD_C"/>
    <property type="match status" value="1"/>
</dbReference>
<dbReference type="SUPFAM" id="SSF48371">
    <property type="entry name" value="ARM repeat"/>
    <property type="match status" value="2"/>
</dbReference>
<feature type="chain" id="PRO_0000064568" description="Tubulin-folding cofactor D">
    <location>
        <begin position="1"/>
        <end position="1105"/>
    </location>
</feature>
<feature type="repeat" description="HEAT 1">
    <location>
        <begin position="308"/>
        <end position="345"/>
    </location>
</feature>
<feature type="repeat" description="HEAT 2">
    <location>
        <begin position="347"/>
        <end position="385"/>
    </location>
</feature>
<feature type="repeat" description="HEAT 3">
    <location>
        <begin position="401"/>
        <end position="446"/>
    </location>
</feature>
<feature type="repeat" description="HEAT 4">
    <location>
        <begin position="452"/>
        <end position="489"/>
    </location>
</feature>
<feature type="glycosylation site" description="N-linked (GlcNAc...) asparagine" evidence="1">
    <location>
        <position position="122"/>
    </location>
</feature>
<feature type="glycosylation site" description="N-linked (GlcNAc...) asparagine" evidence="1">
    <location>
        <position position="126"/>
    </location>
</feature>
<feature type="glycosylation site" description="N-linked (GlcNAc...) asparagine" evidence="1">
    <location>
        <position position="373"/>
    </location>
</feature>
<feature type="glycosylation site" description="N-linked (GlcNAc...) asparagine" evidence="1">
    <location>
        <position position="721"/>
    </location>
</feature>
<feature type="glycosylation site" description="N-linked (GlcNAc...) asparagine" evidence="1">
    <location>
        <position position="883"/>
    </location>
</feature>
<feature type="glycosylation site" description="N-linked (GlcNAc...) asparagine" evidence="1">
    <location>
        <position position="1083"/>
    </location>
</feature>
<feature type="sequence conflict" description="In Ref. 2; CAA20686." evidence="4" ref="2">
    <location>
        <begin position="988"/>
        <end position="1001"/>
    </location>
</feature>
<reference key="1">
    <citation type="journal article" date="1998" name="EMBO J.">
        <title>Essential role of tubulin-folding cofactor D in microtubule assembly and its association with microtubules in fission yeast.</title>
        <authorList>
            <person name="Hirata D."/>
            <person name="Masuda H."/>
            <person name="Eddison M."/>
            <person name="Toda T."/>
        </authorList>
    </citation>
    <scope>NUCLEOTIDE SEQUENCE [GENOMIC DNA]</scope>
    <scope>FUNCTION</scope>
    <scope>SUBCELLULAR LOCATION</scope>
    <source>
        <strain>972 / HM123</strain>
    </source>
</reference>
<reference key="2">
    <citation type="journal article" date="2002" name="Nature">
        <title>The genome sequence of Schizosaccharomyces pombe.</title>
        <authorList>
            <person name="Wood V."/>
            <person name="Gwilliam R."/>
            <person name="Rajandream M.A."/>
            <person name="Lyne M.H."/>
            <person name="Lyne R."/>
            <person name="Stewart A."/>
            <person name="Sgouros J.G."/>
            <person name="Peat N."/>
            <person name="Hayles J."/>
            <person name="Baker S.G."/>
            <person name="Basham D."/>
            <person name="Bowman S."/>
            <person name="Brooks K."/>
            <person name="Brown D."/>
            <person name="Brown S."/>
            <person name="Chillingworth T."/>
            <person name="Churcher C.M."/>
            <person name="Collins M."/>
            <person name="Connor R."/>
            <person name="Cronin A."/>
            <person name="Davis P."/>
            <person name="Feltwell T."/>
            <person name="Fraser A."/>
            <person name="Gentles S."/>
            <person name="Goble A."/>
            <person name="Hamlin N."/>
            <person name="Harris D.E."/>
            <person name="Hidalgo J."/>
            <person name="Hodgson G."/>
            <person name="Holroyd S."/>
            <person name="Hornsby T."/>
            <person name="Howarth S."/>
            <person name="Huckle E.J."/>
            <person name="Hunt S."/>
            <person name="Jagels K."/>
            <person name="James K.D."/>
            <person name="Jones L."/>
            <person name="Jones M."/>
            <person name="Leather S."/>
            <person name="McDonald S."/>
            <person name="McLean J."/>
            <person name="Mooney P."/>
            <person name="Moule S."/>
            <person name="Mungall K.L."/>
            <person name="Murphy L.D."/>
            <person name="Niblett D."/>
            <person name="Odell C."/>
            <person name="Oliver K."/>
            <person name="O'Neil S."/>
            <person name="Pearson D."/>
            <person name="Quail M.A."/>
            <person name="Rabbinowitsch E."/>
            <person name="Rutherford K.M."/>
            <person name="Rutter S."/>
            <person name="Saunders D."/>
            <person name="Seeger K."/>
            <person name="Sharp S."/>
            <person name="Skelton J."/>
            <person name="Simmonds M.N."/>
            <person name="Squares R."/>
            <person name="Squares S."/>
            <person name="Stevens K."/>
            <person name="Taylor K."/>
            <person name="Taylor R.G."/>
            <person name="Tivey A."/>
            <person name="Walsh S.V."/>
            <person name="Warren T."/>
            <person name="Whitehead S."/>
            <person name="Woodward J.R."/>
            <person name="Volckaert G."/>
            <person name="Aert R."/>
            <person name="Robben J."/>
            <person name="Grymonprez B."/>
            <person name="Weltjens I."/>
            <person name="Vanstreels E."/>
            <person name="Rieger M."/>
            <person name="Schaefer M."/>
            <person name="Mueller-Auer S."/>
            <person name="Gabel C."/>
            <person name="Fuchs M."/>
            <person name="Duesterhoeft A."/>
            <person name="Fritzc C."/>
            <person name="Holzer E."/>
            <person name="Moestl D."/>
            <person name="Hilbert H."/>
            <person name="Borzym K."/>
            <person name="Langer I."/>
            <person name="Beck A."/>
            <person name="Lehrach H."/>
            <person name="Reinhardt R."/>
            <person name="Pohl T.M."/>
            <person name="Eger P."/>
            <person name="Zimmermann W."/>
            <person name="Wedler H."/>
            <person name="Wambutt R."/>
            <person name="Purnelle B."/>
            <person name="Goffeau A."/>
            <person name="Cadieu E."/>
            <person name="Dreano S."/>
            <person name="Gloux S."/>
            <person name="Lelaure V."/>
            <person name="Mottier S."/>
            <person name="Galibert F."/>
            <person name="Aves S.J."/>
            <person name="Xiang Z."/>
            <person name="Hunt C."/>
            <person name="Moore K."/>
            <person name="Hurst S.M."/>
            <person name="Lucas M."/>
            <person name="Rochet M."/>
            <person name="Gaillardin C."/>
            <person name="Tallada V.A."/>
            <person name="Garzon A."/>
            <person name="Thode G."/>
            <person name="Daga R.R."/>
            <person name="Cruzado L."/>
            <person name="Jimenez J."/>
            <person name="Sanchez M."/>
            <person name="del Rey F."/>
            <person name="Benito J."/>
            <person name="Dominguez A."/>
            <person name="Revuelta J.L."/>
            <person name="Moreno S."/>
            <person name="Armstrong J."/>
            <person name="Forsburg S.L."/>
            <person name="Cerutti L."/>
            <person name="Lowe T."/>
            <person name="McCombie W.R."/>
            <person name="Paulsen I."/>
            <person name="Potashkin J."/>
            <person name="Shpakovski G.V."/>
            <person name="Ussery D."/>
            <person name="Barrell B.G."/>
            <person name="Nurse P."/>
        </authorList>
    </citation>
    <scope>NUCLEOTIDE SEQUENCE [LARGE SCALE GENOMIC DNA]</scope>
    <source>
        <strain>972 / ATCC 24843</strain>
    </source>
</reference>
<reference key="3">
    <citation type="journal article" date="2011" name="Science">
        <title>Comparative functional genomics of the fission yeasts.</title>
        <authorList>
            <person name="Rhind N."/>
            <person name="Chen Z."/>
            <person name="Yassour M."/>
            <person name="Thompson D.A."/>
            <person name="Haas B.J."/>
            <person name="Habib N."/>
            <person name="Wapinski I."/>
            <person name="Roy S."/>
            <person name="Lin M.F."/>
            <person name="Heiman D.I."/>
            <person name="Young S.K."/>
            <person name="Furuya K."/>
            <person name="Guo Y."/>
            <person name="Pidoux A."/>
            <person name="Chen H.M."/>
            <person name="Robbertse B."/>
            <person name="Goldberg J.M."/>
            <person name="Aoki K."/>
            <person name="Bayne E.H."/>
            <person name="Berlin A.M."/>
            <person name="Desjardins C.A."/>
            <person name="Dobbs E."/>
            <person name="Dukaj L."/>
            <person name="Fan L."/>
            <person name="FitzGerald M.G."/>
            <person name="French C."/>
            <person name="Gujja S."/>
            <person name="Hansen K."/>
            <person name="Keifenheim D."/>
            <person name="Levin J.Z."/>
            <person name="Mosher R.A."/>
            <person name="Mueller C.A."/>
            <person name="Pfiffner J."/>
            <person name="Priest M."/>
            <person name="Russ C."/>
            <person name="Smialowska A."/>
            <person name="Swoboda P."/>
            <person name="Sykes S.M."/>
            <person name="Vaughn M."/>
            <person name="Vengrova S."/>
            <person name="Yoder R."/>
            <person name="Zeng Q."/>
            <person name="Allshire R."/>
            <person name="Baulcombe D."/>
            <person name="Birren B.W."/>
            <person name="Brown W."/>
            <person name="Ekwall K."/>
            <person name="Kellis M."/>
            <person name="Leatherwood J."/>
            <person name="Levin H."/>
            <person name="Margalit H."/>
            <person name="Martienssen R."/>
            <person name="Nieduszynski C.A."/>
            <person name="Spatafora J.W."/>
            <person name="Friedman N."/>
            <person name="Dalgaard J.Z."/>
            <person name="Baumann P."/>
            <person name="Niki H."/>
            <person name="Regev A."/>
            <person name="Nusbaum C."/>
        </authorList>
    </citation>
    <scope>REVISION OF GENE MODEL</scope>
</reference>
<reference key="4">
    <citation type="journal article" date="1999" name="Mol. Biol. Cell">
        <title>Functional dissection and hierarchy of tubulin-folding cofactor homologues in fission yeast.</title>
        <authorList>
            <person name="Radcliffe P.A."/>
            <person name="Hirata D."/>
            <person name="Vardy L."/>
            <person name="Toda T."/>
        </authorList>
    </citation>
    <scope>INTERACTION WITH ALP21</scope>
</reference>
<gene>
    <name type="primary">alp1</name>
    <name type="ORF">SPBC11C11.04c</name>
</gene>
<sequence length="1105" mass="126274">MEEEESLEGIISIDESLITSRLSQILDDVLDDRSSSHSVEKLKDVAVKYLQFCQFQPTLLDKLLSKYVPNLASYLLKVKNIGKCNSITVILYQFCKIRGYKAVRVLFPVGVQYIKELYTLLNESSNNTWHFHYIVLLWLSQALNTPFPLNSLDDSLDVKKTIYTIAIKYLENSGIDKEASCLVLSRLFSRDDGLDLLLGFLHHCESSWFKRSIFYKIGCLFSLSSFLKICPRNDCLQTVDVAFQFLNVAREDLVGQENSALRKLLCKCYTRLGIVLLPVNSSPNWKYSISNPDSFFQLPDDSNEEVHIYLEVIVDFLLSSVSDIDSFVRWSAAKGLAKIISRLPWNLAEQVIDAIIELMTENMFLNPIENTVNISITSPLVWHGAILFFAKLAGAGLIKYSKCLHILPLIEVGLSYEVRYGTRVTGQSIRDASCYFVWSFYHCYSKSAIEGLQTNLILCLLQTVLFDNEINVRRAATAALFEVIGRHASIPDGLSLISHINYVSVTDISNCYGDLCMKVAHFPQFRSCVFQRLFTNLQHWDVKVQQLSAFSLRQLSIKYPKELSIYLPPILDYLSVGNADFIFGYTIGLASIIGGFLSISFPFDINRIHDLLSHKNLLSLKKFSRQQQTKIILGILKGIQQIFANDIRVDRAFFSEAFSVIIAAIDLQEETIIKDISDAYSVLVKFDDMEETLEVLLDYIRKCSTSKEARIVYIILQNLPNISFRYQKKICKLLLDIYPQLHSIDYQAPVANALQNIIPFTYEKTESIEEFVKELLQVCSNYLTDTRGDVGSWIRKPAMKAISSLLVKDSSGKKLSEDIVWCCISYIIRQTFDKIDSLRGLAYQALEQIRVHYLIRRCEALTNIINRIRNNPNMDGEVLNELNISLLEIPNLRLQAFYGITVFTADGFGSDLAVKCFEFYLSYVYQLEDSFKKSNSRYGKRDLLQLYIDILSSEDEIARFYFPIMKSFTSLLAYGCFTDFQNVKGMSKAIFIVQRRALTCKSPGGLSAILELYRTLFLSKNELLRHHALKYTANLLLNPIEKVRYQAADTLLYAKSIGLLTFLPNELNQKLLTLDWFVPVSQNATFVKQLRNIIQKQIDKLIADR</sequence>
<comment type="function">
    <text evidence="3">Has a function in the folding of beta-tubulin. Microtubule-associated protein that is essential to direct polarized cell growth and to position the nucleus and septum to the center of the cell during mitosis.</text>
</comment>
<comment type="subunit">
    <text evidence="2">Interacts with alp21.</text>
</comment>
<comment type="subcellular location">
    <subcellularLocation>
        <location evidence="3">Cytoplasm</location>
        <location evidence="3">Cytoskeleton</location>
    </subcellularLocation>
    <text>Microtubule-associated.</text>
</comment>
<comment type="sequence caution" evidence="4">
    <conflict type="erroneous gene model prediction">
        <sequence resource="EMBL-CDS" id="CAA71193"/>
    </conflict>
</comment>